<accession>A0A7H0DNC7</accession>
<organismHost>
    <name type="scientific">Cynomys gunnisoni</name>
    <name type="common">Gunnison's prairie dog</name>
    <name type="synonym">Spermophilus gunnisoni</name>
    <dbReference type="NCBI Taxonomy" id="45479"/>
</organismHost>
<organismHost>
    <name type="scientific">Cynomys leucurus</name>
    <name type="common">White-tailed prairie dog</name>
    <dbReference type="NCBI Taxonomy" id="99825"/>
</organismHost>
<organismHost>
    <name type="scientific">Cynomys ludovicianus</name>
    <name type="common">Black-tailed prairie dog</name>
    <dbReference type="NCBI Taxonomy" id="45480"/>
</organismHost>
<organismHost>
    <name type="scientific">Cynomys mexicanus</name>
    <name type="common">Mexican prairie dog</name>
    <dbReference type="NCBI Taxonomy" id="99826"/>
</organismHost>
<organismHost>
    <name type="scientific">Cynomys parvidens</name>
    <name type="common">Utah prairie dog</name>
    <dbReference type="NCBI Taxonomy" id="99827"/>
</organismHost>
<organismHost>
    <name type="scientific">Gliridae</name>
    <name type="common">dormice</name>
    <dbReference type="NCBI Taxonomy" id="30650"/>
</organismHost>
<organismHost>
    <name type="scientific">Heliosciurus ruwenzorii</name>
    <name type="common">Ruwenzori sun squirrel</name>
    <dbReference type="NCBI Taxonomy" id="226685"/>
</organismHost>
<organismHost>
    <name type="scientific">Homo sapiens</name>
    <name type="common">Human</name>
    <dbReference type="NCBI Taxonomy" id="9606"/>
</organismHost>
<organismHost>
    <name type="scientific">Mus musculus</name>
    <name type="common">Mouse</name>
    <dbReference type="NCBI Taxonomy" id="10090"/>
</organismHost>
<dbReference type="EC" id="2.7.7.6"/>
<dbReference type="EMBL" id="MT903340">
    <property type="protein sequence ID" value="QNP13010.1"/>
    <property type="molecule type" value="Genomic_DNA"/>
</dbReference>
<dbReference type="RefSeq" id="YP_010377137.1">
    <property type="nucleotide sequence ID" value="NC_063383.1"/>
</dbReference>
<dbReference type="SMR" id="A0A7H0DNC7"/>
<dbReference type="GeneID" id="72551550"/>
<dbReference type="Proteomes" id="UP000516359">
    <property type="component" value="Genome"/>
</dbReference>
<dbReference type="GO" id="GO:0000428">
    <property type="term" value="C:DNA-directed RNA polymerase complex"/>
    <property type="evidence" value="ECO:0007669"/>
    <property type="project" value="UniProtKB-KW"/>
</dbReference>
<dbReference type="GO" id="GO:0044423">
    <property type="term" value="C:virion component"/>
    <property type="evidence" value="ECO:0007669"/>
    <property type="project" value="UniProtKB-KW"/>
</dbReference>
<dbReference type="GO" id="GO:0003677">
    <property type="term" value="F:DNA binding"/>
    <property type="evidence" value="ECO:0007669"/>
    <property type="project" value="InterPro"/>
</dbReference>
<dbReference type="GO" id="GO:0003899">
    <property type="term" value="F:DNA-directed RNA polymerase activity"/>
    <property type="evidence" value="ECO:0007669"/>
    <property type="project" value="InterPro"/>
</dbReference>
<dbReference type="GO" id="GO:0019083">
    <property type="term" value="P:viral transcription"/>
    <property type="evidence" value="ECO:0007669"/>
    <property type="project" value="InterPro"/>
</dbReference>
<dbReference type="InterPro" id="IPR005059">
    <property type="entry name" value="DNA-dir_RNA_pol_35kDa_poxviral"/>
</dbReference>
<dbReference type="Pfam" id="PF03396">
    <property type="entry name" value="Pox_RNA_pol_35"/>
    <property type="match status" value="1"/>
</dbReference>
<dbReference type="PIRSF" id="PIRSF000746">
    <property type="entry name" value="Rpo35"/>
    <property type="match status" value="1"/>
</dbReference>
<feature type="chain" id="PRO_0000457526" description="DNA-directed RNA polymerase 35 kDa subunit">
    <location>
        <begin position="1"/>
        <end position="305"/>
    </location>
</feature>
<protein>
    <recommendedName>
        <fullName>DNA-directed RNA polymerase 35 kDa subunit</fullName>
        <ecNumber>2.7.7.6</ecNumber>
    </recommendedName>
</protein>
<keyword id="KW-0240">DNA-directed RNA polymerase</keyword>
<keyword id="KW-0548">Nucleotidyltransferase</keyword>
<keyword id="KW-0597">Phosphoprotein</keyword>
<keyword id="KW-1185">Reference proteome</keyword>
<keyword id="KW-0804">Transcription</keyword>
<keyword id="KW-0808">Transferase</keyword>
<keyword id="KW-0946">Virion</keyword>
<evidence type="ECO:0000250" key="1">
    <source>
        <dbReference type="UniProtKB" id="P24757"/>
    </source>
</evidence>
<evidence type="ECO:0000305" key="2"/>
<name>RP35_MONPV</name>
<comment type="function">
    <text evidence="1">Part of the DNA-dependent RNA polymerase which catalyzes the transcription of viral DNA into RNA using the four ribonucleoside triphosphates as substrates. Responsible for the transcription of early, intermediate and late genes. DNA-dependent RNA polymerase associates with the early transcription factor (ETF), itself composed of D6 and A7, thereby allowing the early genes transcription. Late transcription, and probably also intermediate transcription, require newly synthesized RNA polymerase.</text>
</comment>
<comment type="catalytic activity">
    <reaction evidence="1">
        <text>RNA(n) + a ribonucleoside 5'-triphosphate = RNA(n+1) + diphosphate</text>
        <dbReference type="Rhea" id="RHEA:21248"/>
        <dbReference type="Rhea" id="RHEA-COMP:14527"/>
        <dbReference type="Rhea" id="RHEA-COMP:17342"/>
        <dbReference type="ChEBI" id="CHEBI:33019"/>
        <dbReference type="ChEBI" id="CHEBI:61557"/>
        <dbReference type="ChEBI" id="CHEBI:140395"/>
        <dbReference type="EC" id="2.7.7.6"/>
    </reaction>
</comment>
<comment type="subunit">
    <text evidence="1">The DNA-dependent RNA polymerase used for intermediate and late genes expression consists of eight subunits 147 kDa, 133 kDa, 35 kDa, 30 kDa, 22 kDa, 19 kDa, 18 kDa and 7 kDa totalling more than 500 kDa in mass. The same holoenzyme, with the addition of the transcription-specificity factor RAP94, is used for early gene expression.</text>
</comment>
<comment type="subcellular location">
    <subcellularLocation>
        <location evidence="1">Virion</location>
    </subcellularLocation>
    <text evidence="1">All the enzymes and other proteins required to synthesize early mRNAs are packaged within the virion core along with the DNA genome. This is necessary because viral early mRNAs are synthesized within minutes after virus entry into the cell and are extruded through pores in the core particle.</text>
</comment>
<comment type="similarity">
    <text evidence="2">Belongs to the poxviridae DNA-directed RNA polymerase 35 kDa subunit family.</text>
</comment>
<proteinExistence type="inferred from homology"/>
<gene>
    <name type="primary">OPG156</name>
    <name type="ORF">MPXVgp141</name>
</gene>
<organism>
    <name type="scientific">Monkeypox virus</name>
    <dbReference type="NCBI Taxonomy" id="10244"/>
    <lineage>
        <taxon>Viruses</taxon>
        <taxon>Varidnaviria</taxon>
        <taxon>Bamfordvirae</taxon>
        <taxon>Nucleocytoviricota</taxon>
        <taxon>Pokkesviricetes</taxon>
        <taxon>Chitovirales</taxon>
        <taxon>Poxviridae</taxon>
        <taxon>Chordopoxvirinae</taxon>
        <taxon>Orthopoxvirus</taxon>
    </lineage>
</organism>
<sequence length="305" mass="35391">MQHPREENSIVVELEPALATFIKQGFNNLVKWPLLNIGVVLYNTSTAVNEEWLTAVEHIPTMKIFYKHIHKILTREMGFLVYLKRSQSEHDNYITLYDFDYYIIDKDTNSVTMVDKPTELKETLLHVFQEYRLKSSQTIELIAFSSGTVINEDIVSKLTFLDVEVFNREYNNVKTIIDPDFVSRSPFIVISPMGKLTFFVEVYSWFDFKSCFKDIIDFLEGTLIANIHNHMIKVGDCDETVSSYNPESGMLFVNDLMTMNIVNFFGCNSRLESYHRFDMTKVDVELFIKALSDACKKILSASNRL</sequence>
<reference key="1">
    <citation type="journal article" date="2022" name="J. Infect. Dis.">
        <title>Exportation of Monkeypox virus from the African continent.</title>
        <authorList>
            <person name="Mauldin M.R."/>
            <person name="McCollum A.M."/>
            <person name="Nakazawa Y.J."/>
            <person name="Mandra A."/>
            <person name="Whitehouse E.R."/>
            <person name="Davidson W."/>
            <person name="Zhao H."/>
            <person name="Gao J."/>
            <person name="Li Y."/>
            <person name="Doty J."/>
            <person name="Yinka-Ogunleye A."/>
            <person name="Akinpelu A."/>
            <person name="Aruna O."/>
            <person name="Naidoo D."/>
            <person name="Lewandowski K."/>
            <person name="Afrough B."/>
            <person name="Graham V."/>
            <person name="Aarons E."/>
            <person name="Hewson R."/>
            <person name="Vipond R."/>
            <person name="Dunning J."/>
            <person name="Chand M."/>
            <person name="Brown C."/>
            <person name="Cohen-Gihon I."/>
            <person name="Erez N."/>
            <person name="Shifman O."/>
            <person name="Israeli O."/>
            <person name="Sharon M."/>
            <person name="Schwartz E."/>
            <person name="Beth-Din A."/>
            <person name="Zvi A."/>
            <person name="Mak T.M."/>
            <person name="Ng Y.K."/>
            <person name="Cui L."/>
            <person name="Lin R.T.P."/>
            <person name="Olson V.A."/>
            <person name="Brooks T."/>
            <person name="Paran N."/>
            <person name="Ihekweazu C."/>
            <person name="Reynolds M.G."/>
        </authorList>
    </citation>
    <scope>NUCLEOTIDE SEQUENCE [LARGE SCALE GENOMIC DNA]</scope>
    <source>
        <strain>MPXV-M5312_HM12_Rivers</strain>
    </source>
</reference>